<evidence type="ECO:0000255" key="1">
    <source>
        <dbReference type="HAMAP-Rule" id="MF_01080"/>
    </source>
</evidence>
<organism>
    <name type="scientific">Shigella flexneri serotype 5b (strain 8401)</name>
    <dbReference type="NCBI Taxonomy" id="373384"/>
    <lineage>
        <taxon>Bacteria</taxon>
        <taxon>Pseudomonadati</taxon>
        <taxon>Pseudomonadota</taxon>
        <taxon>Gammaproteobacteria</taxon>
        <taxon>Enterobacterales</taxon>
        <taxon>Enterobacteriaceae</taxon>
        <taxon>Shigella</taxon>
    </lineage>
</organism>
<dbReference type="EC" id="5.4.99.25" evidence="1"/>
<dbReference type="EMBL" id="CP000266">
    <property type="protein sequence ID" value="ABF05250.1"/>
    <property type="molecule type" value="Genomic_DNA"/>
</dbReference>
<dbReference type="RefSeq" id="WP_000089698.1">
    <property type="nucleotide sequence ID" value="NC_008258.1"/>
</dbReference>
<dbReference type="SMR" id="Q0T0B5"/>
<dbReference type="GeneID" id="93778817"/>
<dbReference type="KEGG" id="sfv:SFV_3196"/>
<dbReference type="HOGENOM" id="CLU_032087_0_3_6"/>
<dbReference type="Proteomes" id="UP000000659">
    <property type="component" value="Chromosome"/>
</dbReference>
<dbReference type="GO" id="GO:0003723">
    <property type="term" value="F:RNA binding"/>
    <property type="evidence" value="ECO:0007669"/>
    <property type="project" value="InterPro"/>
</dbReference>
<dbReference type="GO" id="GO:0160148">
    <property type="term" value="F:tRNA pseudouridine(55) synthase activity"/>
    <property type="evidence" value="ECO:0007669"/>
    <property type="project" value="UniProtKB-EC"/>
</dbReference>
<dbReference type="GO" id="GO:1990481">
    <property type="term" value="P:mRNA pseudouridine synthesis"/>
    <property type="evidence" value="ECO:0007669"/>
    <property type="project" value="TreeGrafter"/>
</dbReference>
<dbReference type="GO" id="GO:0031119">
    <property type="term" value="P:tRNA pseudouridine synthesis"/>
    <property type="evidence" value="ECO:0007669"/>
    <property type="project" value="UniProtKB-UniRule"/>
</dbReference>
<dbReference type="CDD" id="cd02573">
    <property type="entry name" value="PseudoU_synth_EcTruB"/>
    <property type="match status" value="1"/>
</dbReference>
<dbReference type="CDD" id="cd21152">
    <property type="entry name" value="PUA_TruB_bacterial"/>
    <property type="match status" value="1"/>
</dbReference>
<dbReference type="FunFam" id="2.30.130.10:FF:000004">
    <property type="entry name" value="tRNA pseudouridine synthase B"/>
    <property type="match status" value="1"/>
</dbReference>
<dbReference type="FunFam" id="3.30.2350.10:FF:000003">
    <property type="entry name" value="tRNA pseudouridine synthase B"/>
    <property type="match status" value="1"/>
</dbReference>
<dbReference type="Gene3D" id="3.30.2350.10">
    <property type="entry name" value="Pseudouridine synthase"/>
    <property type="match status" value="1"/>
</dbReference>
<dbReference type="Gene3D" id="2.30.130.10">
    <property type="entry name" value="PUA domain"/>
    <property type="match status" value="1"/>
</dbReference>
<dbReference type="HAMAP" id="MF_01080">
    <property type="entry name" value="TruB_bact"/>
    <property type="match status" value="1"/>
</dbReference>
<dbReference type="InterPro" id="IPR020103">
    <property type="entry name" value="PsdUridine_synth_cat_dom_sf"/>
</dbReference>
<dbReference type="InterPro" id="IPR002501">
    <property type="entry name" value="PsdUridine_synth_N"/>
</dbReference>
<dbReference type="InterPro" id="IPR015947">
    <property type="entry name" value="PUA-like_sf"/>
</dbReference>
<dbReference type="InterPro" id="IPR036974">
    <property type="entry name" value="PUA_sf"/>
</dbReference>
<dbReference type="InterPro" id="IPR014780">
    <property type="entry name" value="tRNA_psdUridine_synth_TruB"/>
</dbReference>
<dbReference type="InterPro" id="IPR015240">
    <property type="entry name" value="tRNA_sdUridine_synth_fam1_C"/>
</dbReference>
<dbReference type="InterPro" id="IPR032819">
    <property type="entry name" value="TruB_C"/>
</dbReference>
<dbReference type="NCBIfam" id="TIGR00431">
    <property type="entry name" value="TruB"/>
    <property type="match status" value="1"/>
</dbReference>
<dbReference type="PANTHER" id="PTHR13767:SF2">
    <property type="entry name" value="PSEUDOURIDYLATE SYNTHASE TRUB1"/>
    <property type="match status" value="1"/>
</dbReference>
<dbReference type="PANTHER" id="PTHR13767">
    <property type="entry name" value="TRNA-PSEUDOURIDINE SYNTHASE"/>
    <property type="match status" value="1"/>
</dbReference>
<dbReference type="Pfam" id="PF09157">
    <property type="entry name" value="TruB-C_2"/>
    <property type="match status" value="1"/>
</dbReference>
<dbReference type="Pfam" id="PF16198">
    <property type="entry name" value="TruB_C_2"/>
    <property type="match status" value="1"/>
</dbReference>
<dbReference type="Pfam" id="PF01509">
    <property type="entry name" value="TruB_N"/>
    <property type="match status" value="1"/>
</dbReference>
<dbReference type="SUPFAM" id="SSF55120">
    <property type="entry name" value="Pseudouridine synthase"/>
    <property type="match status" value="1"/>
</dbReference>
<dbReference type="SUPFAM" id="SSF88697">
    <property type="entry name" value="PUA domain-like"/>
    <property type="match status" value="1"/>
</dbReference>
<reference key="1">
    <citation type="journal article" date="2006" name="BMC Genomics">
        <title>Complete genome sequence of Shigella flexneri 5b and comparison with Shigella flexneri 2a.</title>
        <authorList>
            <person name="Nie H."/>
            <person name="Yang F."/>
            <person name="Zhang X."/>
            <person name="Yang J."/>
            <person name="Chen L."/>
            <person name="Wang J."/>
            <person name="Xiong Z."/>
            <person name="Peng J."/>
            <person name="Sun L."/>
            <person name="Dong J."/>
            <person name="Xue Y."/>
            <person name="Xu X."/>
            <person name="Chen S."/>
            <person name="Yao Z."/>
            <person name="Shen Y."/>
            <person name="Jin Q."/>
        </authorList>
    </citation>
    <scope>NUCLEOTIDE SEQUENCE [LARGE SCALE GENOMIC DNA]</scope>
    <source>
        <strain>8401</strain>
    </source>
</reference>
<gene>
    <name evidence="1" type="primary">truB</name>
    <name type="ordered locus">SFV_3196</name>
</gene>
<sequence length="314" mass="35087">MSRPRRRGRDINGVLLLDKPQGMSSNDALQKVKRIYNANRAGHTGALDPLATGMLPICLGEATKFSQYLLDSDKRYRVIARLGQRTDTSDADGQIVEERPVTFSAEQLAAALDTFRGDIEQIPSMYSALKYQGKKLYEYARQGIEVPREARPITVYELLFIRHEGNELELEIHCSKGTYIRTIIDDLGEKLGCGAHVIYLRRLAVSKYPVERMVTLEHLRELVEQAEQQDIPAAELLDPLLMPMDSPASDYPVVNLPLTSSVYFKNGNPVRTSGAPLEGLVRVTEGENGKFIGMGEIDDEGRVAPRRLVVEYPA</sequence>
<protein>
    <recommendedName>
        <fullName evidence="1">tRNA pseudouridine synthase B</fullName>
        <ecNumber evidence="1">5.4.99.25</ecNumber>
    </recommendedName>
    <alternativeName>
        <fullName evidence="1">tRNA pseudouridine(55) synthase</fullName>
        <shortName evidence="1">Psi55 synthase</shortName>
    </alternativeName>
    <alternativeName>
        <fullName evidence="1">tRNA pseudouridylate synthase</fullName>
    </alternativeName>
    <alternativeName>
        <fullName evidence="1">tRNA-uridine isomerase</fullName>
    </alternativeName>
</protein>
<proteinExistence type="inferred from homology"/>
<accession>Q0T0B5</accession>
<feature type="chain" id="PRO_1000084683" description="tRNA pseudouridine synthase B">
    <location>
        <begin position="1"/>
        <end position="314"/>
    </location>
</feature>
<feature type="active site" description="Nucleophile" evidence="1">
    <location>
        <position position="48"/>
    </location>
</feature>
<feature type="binding site" evidence="1">
    <location>
        <position position="43"/>
    </location>
    <ligand>
        <name>substrate</name>
    </ligand>
</feature>
<feature type="binding site" evidence="1">
    <location>
        <position position="76"/>
    </location>
    <ligand>
        <name>substrate</name>
    </ligand>
</feature>
<feature type="binding site" evidence="1">
    <location>
        <position position="179"/>
    </location>
    <ligand>
        <name>substrate</name>
    </ligand>
</feature>
<feature type="binding site" evidence="1">
    <location>
        <position position="200"/>
    </location>
    <ligand>
        <name>substrate</name>
    </ligand>
</feature>
<comment type="function">
    <text evidence="1">Responsible for synthesis of pseudouridine from uracil-55 in the psi GC loop of transfer RNAs.</text>
</comment>
<comment type="catalytic activity">
    <reaction evidence="1">
        <text>uridine(55) in tRNA = pseudouridine(55) in tRNA</text>
        <dbReference type="Rhea" id="RHEA:42532"/>
        <dbReference type="Rhea" id="RHEA-COMP:10101"/>
        <dbReference type="Rhea" id="RHEA-COMP:10102"/>
        <dbReference type="ChEBI" id="CHEBI:65314"/>
        <dbReference type="ChEBI" id="CHEBI:65315"/>
        <dbReference type="EC" id="5.4.99.25"/>
    </reaction>
</comment>
<comment type="similarity">
    <text evidence="1">Belongs to the pseudouridine synthase TruB family. Type 1 subfamily.</text>
</comment>
<keyword id="KW-0413">Isomerase</keyword>
<keyword id="KW-0819">tRNA processing</keyword>
<name>TRUB_SHIF8</name>